<sequence>MAAPIILFSFLLFFSVSVSALNVGVQLIHPSISLTKECSRKCESEFCSVPPFLRYGKYCGLLYSGCPGERPCDGLDSCCMKHDACVQSKNNDYLSQECSQKFINCMNNFSQKKQPTFKGNKCDADEVIDVISIVMEAALIAGKVLKKP</sequence>
<feature type="signal peptide" evidence="2">
    <location>
        <begin position="1"/>
        <end position="20"/>
    </location>
</feature>
<feature type="chain" id="PRO_0000417561" description="Phospholipase A2-alpha">
    <location>
        <begin position="21"/>
        <end position="148"/>
    </location>
</feature>
<feature type="active site" evidence="3">
    <location>
        <position position="82"/>
    </location>
</feature>
<feature type="binding site" evidence="1">
    <location>
        <position position="58"/>
    </location>
    <ligand>
        <name>Ca(2+)</name>
        <dbReference type="ChEBI" id="CHEBI:29108"/>
    </ligand>
</feature>
<feature type="binding site" evidence="1">
    <location>
        <position position="60"/>
    </location>
    <ligand>
        <name>Ca(2+)</name>
        <dbReference type="ChEBI" id="CHEBI:29108"/>
    </ligand>
</feature>
<feature type="binding site" evidence="1">
    <location>
        <position position="63"/>
    </location>
    <ligand>
        <name>Ca(2+)</name>
        <dbReference type="ChEBI" id="CHEBI:29108"/>
    </ligand>
</feature>
<feature type="binding site" evidence="1">
    <location>
        <position position="83"/>
    </location>
    <ligand>
        <name>Ca(2+)</name>
        <dbReference type="ChEBI" id="CHEBI:29108"/>
    </ligand>
</feature>
<feature type="disulfide bond" evidence="1">
    <location>
        <begin position="38"/>
        <end position="66"/>
    </location>
</feature>
<feature type="disulfide bond" evidence="1">
    <location>
        <begin position="42"/>
        <end position="72"/>
    </location>
</feature>
<feature type="disulfide bond" evidence="1">
    <location>
        <begin position="47"/>
        <end position="122"/>
    </location>
</feature>
<feature type="disulfide bond" evidence="1">
    <location>
        <begin position="59"/>
        <end position="79"/>
    </location>
</feature>
<feature type="disulfide bond" evidence="1">
    <location>
        <begin position="78"/>
        <end position="105"/>
    </location>
</feature>
<feature type="disulfide bond" evidence="1">
    <location>
        <begin position="85"/>
        <end position="98"/>
    </location>
</feature>
<feature type="mutagenesis site" description="Abolishes activity." evidence="6">
    <original>H</original>
    <variation>Q</variation>
    <location>
        <position position="82"/>
    </location>
</feature>
<feature type="mutagenesis site" description="Prevents calcium binding and decreases activity." evidence="6">
    <original>D</original>
    <variation>N</variation>
    <location>
        <position position="83"/>
    </location>
</feature>
<feature type="mutagenesis site" description="Drastically reduces the activity." evidence="6">
    <original>S</original>
    <variation>A</variation>
    <variation>D</variation>
    <location>
        <position position="99"/>
    </location>
</feature>
<comment type="function">
    <text evidence="5 8 9">PA2 catalyzes the calcium-dependent hydrolysis of the 2-acyl groups in 3-sn-phosphoglycerides. Releases lysophospholipids (LPLs) and free fatty acids (FFAs) from membrane phospholipids in response to hormones and other external stimuli. Modulates the trafficking of PIN proteins to the plasma membrane (PubMed:16140037, PubMed:20525850). Negatively regulates MYB30 transcriptional activity and hypersensitive response control (PubMed:20696912).</text>
</comment>
<comment type="catalytic activity">
    <reaction evidence="5">
        <text>a 1,2-diacyl-sn-glycero-3-phosphocholine + H2O = a 1-acyl-sn-glycero-3-phosphocholine + a fatty acid + H(+)</text>
        <dbReference type="Rhea" id="RHEA:15801"/>
        <dbReference type="ChEBI" id="CHEBI:15377"/>
        <dbReference type="ChEBI" id="CHEBI:15378"/>
        <dbReference type="ChEBI" id="CHEBI:28868"/>
        <dbReference type="ChEBI" id="CHEBI:57643"/>
        <dbReference type="ChEBI" id="CHEBI:58168"/>
        <dbReference type="EC" id="3.1.1.4"/>
    </reaction>
</comment>
<comment type="cofactor">
    <cofactor evidence="11">
        <name>Ca(2+)</name>
        <dbReference type="ChEBI" id="CHEBI:29108"/>
    </cofactor>
    <text>Binds 1 Ca(2+) ion per subunit.</text>
</comment>
<comment type="biophysicochemical properties">
    <kinetics>
        <Vmax evidence="7">15.3 umol/min/mg enzyme toward Dioleolyl-phosphoethanolamine (in the presence of 10 mM Calcium)</Vmax>
        <Vmax evidence="7">9.9 umol/min/mg enzyme toward DOPG (in the presence of 10 mM Calcium)</Vmax>
        <Vmax evidence="7">16.7 umol/min/mg enzyme toward Dioleolyl-phosphocholine (in the presence of 10 mM Calcium)</Vmax>
        <Vmax evidence="7">19.5 umol/min/mg enzyme toward Dilinoleoyl-phosphocholine (in the presence of 10 mM Calcium)</Vmax>
        <Vmax evidence="7">20.6 umol/min/mg enzyme toward Dipalmitoyl-phosphocholine (in the presence of 10 mM Calcium)</Vmax>
        <Vmax evidence="7">27.3 umol/min/mg enzyme toward Dimyristoyl-phosphocholine (in the presence of 10 mM Calcium)</Vmax>
        <Vmax evidence="7">29.3 umol/min/mg enzyme toward Dilauroyl-phosphocholine (in the presence of 10 mM Calcium)</Vmax>
        <Vmax evidence="7">35.5 umol/min/mg enzyme toward Didecanoyl-phosphocholine (in the presence of 10 mM Calcium)</Vmax>
        <Vmax evidence="7">14.4 umol/min/mg enzyme toward Dioctanoyl-phosphocholine (in the presence of 10 mM Calcium)</Vmax>
        <Vmax evidence="7">5.9 umol/min/mg enzyme toward Diheptanoyl-phosphocholine (in the presence of 10 mM Calcium)</Vmax>
        <Vmax evidence="7">1.1 umol/min/mg enzyme toward Dihexanoyl-phosphocholine (in the presence of 10 mM Calcium)</Vmax>
    </kinetics>
    <phDependence>
        <text evidence="7">Optimum pH is 8.5-9.</text>
    </phDependence>
    <temperatureDependence>
        <text evidence="7">Optimum temperature is 30-40 degrees Celsius.</text>
    </temperatureDependence>
</comment>
<comment type="subunit">
    <text evidence="9">Interacts with MYB30.</text>
</comment>
<comment type="interaction">
    <interactant intactId="EBI-15869996">
        <id>Q8S8N6</id>
    </interactant>
    <interactant intactId="EBI-4466599">
        <id>Q9SCU7</id>
        <label>MYB30</label>
    </interactant>
    <organismsDiffer>false</organismsDiffer>
    <experiments>4</experiments>
</comment>
<comment type="subcellular location">
    <subcellularLocation>
        <location evidence="9">Secreted</location>
    </subcellularLocation>
    <subcellularLocation>
        <location evidence="8">Golgi apparatus</location>
    </subcellularLocation>
    <subcellularLocation>
        <location evidence="9">Cytoplasmic vesicle</location>
    </subcellularLocation>
    <subcellularLocation>
        <location evidence="9">Nucleus</location>
    </subcellularLocation>
    <text evidence="9">Relocalization from cytoplasmic vesicles to nucleus is MYB30-mediated.</text>
</comment>
<comment type="tissue specificity">
    <text evidence="4 5">Ubiquitous but expressed at a low level.</text>
</comment>
<comment type="induction">
    <text evidence="9">Induced 6 hours post pathogen infection in the area immediately neighboring the inoculated zone.</text>
</comment>
<comment type="miscellaneous">
    <text>The enzyme has a preference towards linoleoyl acyl chain over palmitoyl acyl chain. It also has a slight preference for phosphatidylethanolamine over phosphatidylcholine.</text>
</comment>
<comment type="similarity">
    <text evidence="11">Belongs to the phospholipase A2 family.</text>
</comment>
<name>PLA2A_ARATH</name>
<keyword id="KW-0106">Calcium</keyword>
<keyword id="KW-0968">Cytoplasmic vesicle</keyword>
<keyword id="KW-1015">Disulfide bond</keyword>
<keyword id="KW-0333">Golgi apparatus</keyword>
<keyword id="KW-0378">Hydrolase</keyword>
<keyword id="KW-0442">Lipid degradation</keyword>
<keyword id="KW-0443">Lipid metabolism</keyword>
<keyword id="KW-0479">Metal-binding</keyword>
<keyword id="KW-0539">Nucleus</keyword>
<keyword id="KW-1185">Reference proteome</keyword>
<keyword id="KW-0964">Secreted</keyword>
<keyword id="KW-0732">Signal</keyword>
<protein>
    <recommendedName>
        <fullName evidence="10">Phospholipase A2-alpha</fullName>
        <ecNumber evidence="5">3.1.1.4</ecNumber>
    </recommendedName>
    <alternativeName>
        <fullName>Secretory phospholipase A2-alpha</fullName>
        <shortName>AtsPLA2-alpha</shortName>
    </alternativeName>
</protein>
<dbReference type="EC" id="3.1.1.4" evidence="5"/>
<dbReference type="EMBL" id="AY344842">
    <property type="protein sequence ID" value="AAR04682.1"/>
    <property type="molecule type" value="mRNA"/>
</dbReference>
<dbReference type="EMBL" id="AC005171">
    <property type="protein sequence ID" value="AAM15017.1"/>
    <property type="molecule type" value="Genomic_DNA"/>
</dbReference>
<dbReference type="EMBL" id="CP002685">
    <property type="protein sequence ID" value="AEC06025.1"/>
    <property type="molecule type" value="Genomic_DNA"/>
</dbReference>
<dbReference type="EMBL" id="AY136317">
    <property type="protein sequence ID" value="AAM96983.1"/>
    <property type="molecule type" value="mRNA"/>
</dbReference>
<dbReference type="EMBL" id="BT002200">
    <property type="protein sequence ID" value="AAN72211.1"/>
    <property type="molecule type" value="mRNA"/>
</dbReference>
<dbReference type="EMBL" id="AK221680">
    <property type="protein sequence ID" value="BAD95375.1"/>
    <property type="molecule type" value="mRNA"/>
</dbReference>
<dbReference type="EMBL" id="AY088532">
    <property type="protein sequence ID" value="AAM66065.1"/>
    <property type="molecule type" value="mRNA"/>
</dbReference>
<dbReference type="RefSeq" id="NP_565337.1">
    <property type="nucleotide sequence ID" value="NM_126670.3"/>
</dbReference>
<dbReference type="SMR" id="Q8S8N6"/>
<dbReference type="DIP" id="DIP-59549N"/>
<dbReference type="FunCoup" id="Q8S8N6">
    <property type="interactions" value="231"/>
</dbReference>
<dbReference type="IntAct" id="Q8S8N6">
    <property type="interactions" value="1"/>
</dbReference>
<dbReference type="STRING" id="3702.Q8S8N6"/>
<dbReference type="PaxDb" id="3702-AT2G06925.1"/>
<dbReference type="ProteomicsDB" id="234764"/>
<dbReference type="EnsemblPlants" id="AT2G06925.1">
    <property type="protein sequence ID" value="AT2G06925.1"/>
    <property type="gene ID" value="AT2G06925"/>
</dbReference>
<dbReference type="GeneID" id="815261"/>
<dbReference type="Gramene" id="AT2G06925.1">
    <property type="protein sequence ID" value="AT2G06925.1"/>
    <property type="gene ID" value="AT2G06925"/>
</dbReference>
<dbReference type="KEGG" id="ath:AT2G06925"/>
<dbReference type="Araport" id="AT2G06925"/>
<dbReference type="TAIR" id="AT2G06925">
    <property type="gene designation" value="PLA2-ALPHA"/>
</dbReference>
<dbReference type="eggNOG" id="ENOG502RYYJ">
    <property type="taxonomic scope" value="Eukaryota"/>
</dbReference>
<dbReference type="HOGENOM" id="CLU_115623_0_0_1"/>
<dbReference type="InParanoid" id="Q8S8N6"/>
<dbReference type="OMA" id="CQVDEVI"/>
<dbReference type="OrthoDB" id="1932081at2759"/>
<dbReference type="PhylomeDB" id="Q8S8N6"/>
<dbReference type="BioCyc" id="ARA:AT2G06925-MONOMER"/>
<dbReference type="BioCyc" id="MetaCyc:AT2G06925-MONOMER"/>
<dbReference type="BRENDA" id="3.1.1.4">
    <property type="organism ID" value="399"/>
</dbReference>
<dbReference type="PRO" id="PR:Q8S8N6"/>
<dbReference type="Proteomes" id="UP000006548">
    <property type="component" value="Chromosome 2"/>
</dbReference>
<dbReference type="ExpressionAtlas" id="Q8S8N6">
    <property type="expression patterns" value="baseline and differential"/>
</dbReference>
<dbReference type="GO" id="GO:0031410">
    <property type="term" value="C:cytoplasmic vesicle"/>
    <property type="evidence" value="ECO:0007669"/>
    <property type="project" value="UniProtKB-KW"/>
</dbReference>
<dbReference type="GO" id="GO:0005576">
    <property type="term" value="C:extracellular region"/>
    <property type="evidence" value="ECO:0007669"/>
    <property type="project" value="UniProtKB-SubCell"/>
</dbReference>
<dbReference type="GO" id="GO:0005794">
    <property type="term" value="C:Golgi apparatus"/>
    <property type="evidence" value="ECO:0000314"/>
    <property type="project" value="UniProtKB"/>
</dbReference>
<dbReference type="GO" id="GO:0005634">
    <property type="term" value="C:nucleus"/>
    <property type="evidence" value="ECO:0007669"/>
    <property type="project" value="UniProtKB-SubCell"/>
</dbReference>
<dbReference type="GO" id="GO:0005773">
    <property type="term" value="C:vacuole"/>
    <property type="evidence" value="ECO:0000304"/>
    <property type="project" value="TAIR"/>
</dbReference>
<dbReference type="GO" id="GO:0005509">
    <property type="term" value="F:calcium ion binding"/>
    <property type="evidence" value="ECO:0007669"/>
    <property type="project" value="InterPro"/>
</dbReference>
<dbReference type="GO" id="GO:0004623">
    <property type="term" value="F:phospholipase A2 activity"/>
    <property type="evidence" value="ECO:0000314"/>
    <property type="project" value="UniProtKB"/>
</dbReference>
<dbReference type="GO" id="GO:0050482">
    <property type="term" value="P:arachidonate secretion"/>
    <property type="evidence" value="ECO:0007669"/>
    <property type="project" value="InterPro"/>
</dbReference>
<dbReference type="GO" id="GO:0016042">
    <property type="term" value="P:lipid catabolic process"/>
    <property type="evidence" value="ECO:0007669"/>
    <property type="project" value="UniProtKB-KW"/>
</dbReference>
<dbReference type="GO" id="GO:0006644">
    <property type="term" value="P:phospholipid metabolic process"/>
    <property type="evidence" value="ECO:0007669"/>
    <property type="project" value="InterPro"/>
</dbReference>
<dbReference type="CDD" id="cd04706">
    <property type="entry name" value="PLA2_plant"/>
    <property type="match status" value="1"/>
</dbReference>
<dbReference type="FunFam" id="1.20.90.10:FF:000005">
    <property type="entry name" value="Secretory phospholipase A2"/>
    <property type="match status" value="1"/>
</dbReference>
<dbReference type="Gene3D" id="1.20.90.10">
    <property type="entry name" value="Phospholipase A2 domain"/>
    <property type="match status" value="1"/>
</dbReference>
<dbReference type="InterPro" id="IPR001211">
    <property type="entry name" value="PLipase_A2"/>
</dbReference>
<dbReference type="InterPro" id="IPR036444">
    <property type="entry name" value="PLipase_A2_dom_sf"/>
</dbReference>
<dbReference type="InterPro" id="IPR033113">
    <property type="entry name" value="PLipase_A2_His_AS"/>
</dbReference>
<dbReference type="PANTHER" id="PTHR11716">
    <property type="entry name" value="PHOSPHOLIPASE A2 FAMILY MEMBER"/>
    <property type="match status" value="1"/>
</dbReference>
<dbReference type="PANTHER" id="PTHR11716:SF47">
    <property type="entry name" value="PHOSPHOLIPASE A2-ALPHA"/>
    <property type="match status" value="1"/>
</dbReference>
<dbReference type="SUPFAM" id="SSF48619">
    <property type="entry name" value="Phospholipase A2, PLA2"/>
    <property type="match status" value="1"/>
</dbReference>
<dbReference type="PROSITE" id="PS00118">
    <property type="entry name" value="PA2_HIS"/>
    <property type="match status" value="1"/>
</dbReference>
<reference key="1">
    <citation type="journal article" date="2005" name="Biochim. Biophys. Acta">
        <title>Characterization of a cDNA encoding Arabidopsis secretory phospholipase A2-alpha, an enzyme that generates bioactive lysophospholipids and free fatty acids.</title>
        <authorList>
            <person name="Ryu S.B."/>
            <person name="Lee H.Y."/>
            <person name="Doelling J.H."/>
            <person name="Palta J.P."/>
        </authorList>
    </citation>
    <scope>NUCLEOTIDE SEQUENCE [MRNA]</scope>
    <scope>FUNCTION</scope>
    <scope>CATALYTIC ACTIVITY</scope>
    <scope>TISSUE SPECIFICITY</scope>
    <source>
        <strain>cv. Columbia</strain>
    </source>
</reference>
<reference key="2">
    <citation type="journal article" date="1999" name="Nature">
        <title>Sequence and analysis of chromosome 2 of the plant Arabidopsis thaliana.</title>
        <authorList>
            <person name="Lin X."/>
            <person name="Kaul S."/>
            <person name="Rounsley S.D."/>
            <person name="Shea T.P."/>
            <person name="Benito M.-I."/>
            <person name="Town C.D."/>
            <person name="Fujii C.Y."/>
            <person name="Mason T.M."/>
            <person name="Bowman C.L."/>
            <person name="Barnstead M.E."/>
            <person name="Feldblyum T.V."/>
            <person name="Buell C.R."/>
            <person name="Ketchum K.A."/>
            <person name="Lee J.J."/>
            <person name="Ronning C.M."/>
            <person name="Koo H.L."/>
            <person name="Moffat K.S."/>
            <person name="Cronin L.A."/>
            <person name="Shen M."/>
            <person name="Pai G."/>
            <person name="Van Aken S."/>
            <person name="Umayam L."/>
            <person name="Tallon L.J."/>
            <person name="Gill J.E."/>
            <person name="Adams M.D."/>
            <person name="Carrera A.J."/>
            <person name="Creasy T.H."/>
            <person name="Goodman H.M."/>
            <person name="Somerville C.R."/>
            <person name="Copenhaver G.P."/>
            <person name="Preuss D."/>
            <person name="Nierman W.C."/>
            <person name="White O."/>
            <person name="Eisen J.A."/>
            <person name="Salzberg S.L."/>
            <person name="Fraser C.M."/>
            <person name="Venter J.C."/>
        </authorList>
    </citation>
    <scope>NUCLEOTIDE SEQUENCE [LARGE SCALE GENOMIC DNA]</scope>
    <source>
        <strain>cv. Columbia</strain>
    </source>
</reference>
<reference key="3">
    <citation type="journal article" date="2017" name="Plant J.">
        <title>Araport11: a complete reannotation of the Arabidopsis thaliana reference genome.</title>
        <authorList>
            <person name="Cheng C.Y."/>
            <person name="Krishnakumar V."/>
            <person name="Chan A.P."/>
            <person name="Thibaud-Nissen F."/>
            <person name="Schobel S."/>
            <person name="Town C.D."/>
        </authorList>
    </citation>
    <scope>GENOME REANNOTATION</scope>
    <source>
        <strain>cv. Columbia</strain>
    </source>
</reference>
<reference key="4">
    <citation type="journal article" date="2003" name="Science">
        <title>Empirical analysis of transcriptional activity in the Arabidopsis genome.</title>
        <authorList>
            <person name="Yamada K."/>
            <person name="Lim J."/>
            <person name="Dale J.M."/>
            <person name="Chen H."/>
            <person name="Shinn P."/>
            <person name="Palm C.J."/>
            <person name="Southwick A.M."/>
            <person name="Wu H.C."/>
            <person name="Kim C.J."/>
            <person name="Nguyen M."/>
            <person name="Pham P.K."/>
            <person name="Cheuk R.F."/>
            <person name="Karlin-Newmann G."/>
            <person name="Liu S.X."/>
            <person name="Lam B."/>
            <person name="Sakano H."/>
            <person name="Wu T."/>
            <person name="Yu G."/>
            <person name="Miranda M."/>
            <person name="Quach H.L."/>
            <person name="Tripp M."/>
            <person name="Chang C.H."/>
            <person name="Lee J.M."/>
            <person name="Toriumi M.J."/>
            <person name="Chan M.M."/>
            <person name="Tang C.C."/>
            <person name="Onodera C.S."/>
            <person name="Deng J.M."/>
            <person name="Akiyama K."/>
            <person name="Ansari Y."/>
            <person name="Arakawa T."/>
            <person name="Banh J."/>
            <person name="Banno F."/>
            <person name="Bowser L."/>
            <person name="Brooks S.Y."/>
            <person name="Carninci P."/>
            <person name="Chao Q."/>
            <person name="Choy N."/>
            <person name="Enju A."/>
            <person name="Goldsmith A.D."/>
            <person name="Gurjal M."/>
            <person name="Hansen N.F."/>
            <person name="Hayashizaki Y."/>
            <person name="Johnson-Hopson C."/>
            <person name="Hsuan V.W."/>
            <person name="Iida K."/>
            <person name="Karnes M."/>
            <person name="Khan S."/>
            <person name="Koesema E."/>
            <person name="Ishida J."/>
            <person name="Jiang P.X."/>
            <person name="Jones T."/>
            <person name="Kawai J."/>
            <person name="Kamiya A."/>
            <person name="Meyers C."/>
            <person name="Nakajima M."/>
            <person name="Narusaka M."/>
            <person name="Seki M."/>
            <person name="Sakurai T."/>
            <person name="Satou M."/>
            <person name="Tamse R."/>
            <person name="Vaysberg M."/>
            <person name="Wallender E.K."/>
            <person name="Wong C."/>
            <person name="Yamamura Y."/>
            <person name="Yuan S."/>
            <person name="Shinozaki K."/>
            <person name="Davis R.W."/>
            <person name="Theologis A."/>
            <person name="Ecker J.R."/>
        </authorList>
    </citation>
    <scope>NUCLEOTIDE SEQUENCE [LARGE SCALE MRNA]</scope>
    <source>
        <strain>cv. Columbia</strain>
    </source>
</reference>
<reference key="5">
    <citation type="submission" date="2005-03" db="EMBL/GenBank/DDBJ databases">
        <title>Large-scale analysis of RIKEN Arabidopsis full-length (RAFL) cDNAs.</title>
        <authorList>
            <person name="Totoki Y."/>
            <person name="Seki M."/>
            <person name="Ishida J."/>
            <person name="Nakajima M."/>
            <person name="Enju A."/>
            <person name="Kamiya A."/>
            <person name="Narusaka M."/>
            <person name="Shin-i T."/>
            <person name="Nakagawa M."/>
            <person name="Sakamoto N."/>
            <person name="Oishi K."/>
            <person name="Kohara Y."/>
            <person name="Kobayashi M."/>
            <person name="Toyoda A."/>
            <person name="Sakaki Y."/>
            <person name="Sakurai T."/>
            <person name="Iida K."/>
            <person name="Akiyama K."/>
            <person name="Satou M."/>
            <person name="Toyoda T."/>
            <person name="Konagaya A."/>
            <person name="Carninci P."/>
            <person name="Kawai J."/>
            <person name="Hayashizaki Y."/>
            <person name="Shinozaki K."/>
        </authorList>
    </citation>
    <scope>NUCLEOTIDE SEQUENCE [LARGE SCALE MRNA]</scope>
    <source>
        <strain>cv. Columbia</strain>
    </source>
</reference>
<reference key="6">
    <citation type="submission" date="2002-03" db="EMBL/GenBank/DDBJ databases">
        <title>Full-length cDNA from Arabidopsis thaliana.</title>
        <authorList>
            <person name="Brover V.V."/>
            <person name="Troukhan M.E."/>
            <person name="Alexandrov N.A."/>
            <person name="Lu Y.-P."/>
            <person name="Flavell R.B."/>
            <person name="Feldmann K.A."/>
        </authorList>
    </citation>
    <scope>NUCLEOTIDE SEQUENCE [LARGE SCALE MRNA]</scope>
</reference>
<reference key="7">
    <citation type="journal article" date="2004" name="Trends Plant Sci.">
        <title>Phospholipid-derived signaling mediated by phospholipase A in plants.</title>
        <authorList>
            <person name="Ryu S.B."/>
        </authorList>
    </citation>
    <scope>GENE FAMILY</scope>
    <scope>NOMENCLATURE</scope>
</reference>
<reference key="8">
    <citation type="journal article" date="2005" name="Prog. Lipid Res.">
        <title>Multiple forms of secretory phospholipase A2 in plants.</title>
        <authorList>
            <person name="Lee H.Y."/>
            <person name="Bahn S.C."/>
            <person name="Shin J.S."/>
            <person name="Hwang I."/>
            <person name="Back K."/>
            <person name="Doelling J.H."/>
            <person name="Ryu S.B."/>
        </authorList>
    </citation>
    <scope>TISSUE SPECIFICITY</scope>
</reference>
<reference key="9">
    <citation type="journal article" date="2006" name="Biochemistry">
        <title>Secretory phospholipase A2 from Arabidopsis thaliana: insights into the three-dimensional structure and the amino acids involved in catalysis.</title>
        <authorList>
            <person name="Mansfeld J."/>
            <person name="Gebauer S."/>
            <person name="Dathe K."/>
            <person name="Ulbrich-Hofmann R."/>
        </authorList>
    </citation>
    <scope>MUTAGENESIS OF HIS-82; ASP-83 AND SER-99</scope>
</reference>
<reference key="10">
    <citation type="journal article" date="2007" name="Chem. Phys. Lipids">
        <title>Secretory phospholipase A2-alpha from Arabidopsis thaliana: functional parameters and substrate preference.</title>
        <authorList>
            <person name="Mansfeld J."/>
            <person name="Ulbrich-Hofmann R."/>
        </authorList>
    </citation>
    <scope>BIOPHYSICOCHEMICAL PROPERTIES</scope>
</reference>
<reference key="11">
    <citation type="journal article" date="2010" name="Plant Cell">
        <title>Phospholipase A(2) is required for PIN-FORMED protein trafficking to the plasma membrane in the Arabidopsis root.</title>
        <authorList>
            <person name="Lee O.R."/>
            <person name="Kim S.J."/>
            <person name="Kim H.J."/>
            <person name="Hong J.K."/>
            <person name="Ryu S.B."/>
            <person name="Lee S.H."/>
            <person name="Ganguly A."/>
            <person name="Cho H.T."/>
        </authorList>
    </citation>
    <scope>FUNCTION</scope>
    <scope>SUBCELLULAR LOCATION</scope>
</reference>
<reference key="12">
    <citation type="journal article" date="2010" name="Proc. Natl. Acad. Sci. U.S.A.">
        <title>AtsPLA2-alpha nuclear relocalization by the Arabidopsis transcription factor AtMYB30 leads to repression of the plant defense response.</title>
        <authorList>
            <person name="Froidure S."/>
            <person name="Canonne J."/>
            <person name="Daniel X."/>
            <person name="Jauneau A."/>
            <person name="Briere C."/>
            <person name="Roby D."/>
            <person name="Rivas S."/>
        </authorList>
    </citation>
    <scope>FUNCTION</scope>
    <scope>INTERACTION WITH MYB30</scope>
    <scope>INDUCTION BY PATHOGEN</scope>
    <scope>SUBCELLULAR LOCATION</scope>
</reference>
<evidence type="ECO:0000250" key="1"/>
<evidence type="ECO:0000255" key="2"/>
<evidence type="ECO:0000255" key="3">
    <source>
        <dbReference type="PROSITE-ProRule" id="PRU10035"/>
    </source>
</evidence>
<evidence type="ECO:0000269" key="4">
    <source>
    </source>
</evidence>
<evidence type="ECO:0000269" key="5">
    <source>
    </source>
</evidence>
<evidence type="ECO:0000269" key="6">
    <source>
    </source>
</evidence>
<evidence type="ECO:0000269" key="7">
    <source>
    </source>
</evidence>
<evidence type="ECO:0000269" key="8">
    <source>
    </source>
</evidence>
<evidence type="ECO:0000269" key="9">
    <source>
    </source>
</evidence>
<evidence type="ECO:0000303" key="10">
    <source>
    </source>
</evidence>
<evidence type="ECO:0000305" key="11"/>
<evidence type="ECO:0000312" key="12">
    <source>
        <dbReference type="Araport" id="AT2G06925"/>
    </source>
</evidence>
<evidence type="ECO:0000312" key="13">
    <source>
        <dbReference type="EMBL" id="AAM15017.1"/>
    </source>
</evidence>
<organism>
    <name type="scientific">Arabidopsis thaliana</name>
    <name type="common">Mouse-ear cress</name>
    <dbReference type="NCBI Taxonomy" id="3702"/>
    <lineage>
        <taxon>Eukaryota</taxon>
        <taxon>Viridiplantae</taxon>
        <taxon>Streptophyta</taxon>
        <taxon>Embryophyta</taxon>
        <taxon>Tracheophyta</taxon>
        <taxon>Spermatophyta</taxon>
        <taxon>Magnoliopsida</taxon>
        <taxon>eudicotyledons</taxon>
        <taxon>Gunneridae</taxon>
        <taxon>Pentapetalae</taxon>
        <taxon>rosids</taxon>
        <taxon>malvids</taxon>
        <taxon>Brassicales</taxon>
        <taxon>Brassicaceae</taxon>
        <taxon>Camelineae</taxon>
        <taxon>Arabidopsis</taxon>
    </lineage>
</organism>
<proteinExistence type="evidence at protein level"/>
<gene>
    <name evidence="10" type="primary">PLA2-ALPHA</name>
    <name evidence="12" type="ordered locus">At2g06925</name>
    <name evidence="13" type="ORF">T4E14.19</name>
</gene>
<accession>Q8S8N6</accession>